<organism evidence="9">
    <name type="scientific">Drosophila melanogaster</name>
    <name type="common">Fruit fly</name>
    <dbReference type="NCBI Taxonomy" id="7227"/>
    <lineage>
        <taxon>Eukaryota</taxon>
        <taxon>Metazoa</taxon>
        <taxon>Ecdysozoa</taxon>
        <taxon>Arthropoda</taxon>
        <taxon>Hexapoda</taxon>
        <taxon>Insecta</taxon>
        <taxon>Pterygota</taxon>
        <taxon>Neoptera</taxon>
        <taxon>Endopterygota</taxon>
        <taxon>Diptera</taxon>
        <taxon>Brachycera</taxon>
        <taxon>Muscomorpha</taxon>
        <taxon>Ephydroidea</taxon>
        <taxon>Drosophilidae</taxon>
        <taxon>Drosophila</taxon>
        <taxon>Sophophora</taxon>
    </lineage>
</organism>
<proteinExistence type="evidence at protein level"/>
<protein>
    <recommendedName>
        <fullName evidence="1">Zinc finger protein 277</fullName>
    </recommendedName>
</protein>
<comment type="function">
    <text evidence="4 5">DNA binding protein which is involved in the positive regulation of both basal and inducible transcription (PubMed:33456983). Mainly localizes to active promoter sites and interacts with components of various transcription and replication regulatory complexes, such as the ORC, SAGA, THO, TFIID and SWI/SNF complexes (PubMed:30713769, PubMed:33456983). It may therefore regulate transcription by promoting the association of these complexes to their binding sites (PubMed:30713769, PubMed:33456983).</text>
</comment>
<comment type="subunit">
    <text evidence="4">Interacts with components of the origin recognition complex (ORC) complex, Orc2 and Orc3, components of the SAGA transcription coactivator-HAT complex, Gcn5 and e(y)2, components of the mRNP biogenesis THO complex, thoc5 and e(y)2, and a component of the TFIID complex, TBP (PubMed:30713769). Also interacts with polybromo, a component of the chromatin remodeling SWI/SNF complex (PubMed:30713769).</text>
</comment>
<comment type="subcellular location">
    <subcellularLocation>
        <location evidence="4 5">Nucleus</location>
    </subcellularLocation>
    <subcellularLocation>
        <location evidence="4">Cytoplasm</location>
    </subcellularLocation>
    <text evidence="4 5">Predominantly localizes to the cell nucleus (PubMed:30713769). Associates with chromatin (PubMed:33456983).</text>
</comment>
<comment type="similarity">
    <text evidence="6">Belongs to the ZNF277 family.</text>
</comment>
<evidence type="ECO:0000250" key="1">
    <source>
        <dbReference type="UniProtKB" id="Q9NRM2"/>
    </source>
</evidence>
<evidence type="ECO:0000255" key="2">
    <source>
        <dbReference type="PROSITE-ProRule" id="PRU00042"/>
    </source>
</evidence>
<evidence type="ECO:0000256" key="3">
    <source>
        <dbReference type="SAM" id="MobiDB-lite"/>
    </source>
</evidence>
<evidence type="ECO:0000269" key="4">
    <source>
    </source>
</evidence>
<evidence type="ECO:0000269" key="5">
    <source>
    </source>
</evidence>
<evidence type="ECO:0000305" key="6"/>
<evidence type="ECO:0000312" key="7">
    <source>
        <dbReference type="EMBL" id="AAL29058.1"/>
    </source>
</evidence>
<evidence type="ECO:0000312" key="8">
    <source>
        <dbReference type="FlyBase" id="FBgn0034814"/>
    </source>
</evidence>
<evidence type="ECO:0000312" key="9">
    <source>
        <dbReference type="Proteomes" id="UP000000803"/>
    </source>
</evidence>
<dbReference type="EMBL" id="AE013599">
    <property type="protein sequence ID" value="AAF46945.1"/>
    <property type="molecule type" value="Genomic_DNA"/>
</dbReference>
<dbReference type="EMBL" id="AY061510">
    <property type="protein sequence ID" value="AAL29058.1"/>
    <property type="molecule type" value="mRNA"/>
</dbReference>
<dbReference type="RefSeq" id="NP_611750.1">
    <property type="nucleotide sequence ID" value="NM_137906.4"/>
</dbReference>
<dbReference type="FunCoup" id="Q9W1V7">
    <property type="interactions" value="1679"/>
</dbReference>
<dbReference type="IntAct" id="Q9W1V7">
    <property type="interactions" value="20"/>
</dbReference>
<dbReference type="STRING" id="7227.FBpp0071893"/>
<dbReference type="GlyGen" id="Q9W1V7">
    <property type="glycosylation" value="1 site"/>
</dbReference>
<dbReference type="PaxDb" id="7227-FBpp0071893"/>
<dbReference type="DNASU" id="37659"/>
<dbReference type="EnsemblMetazoa" id="FBtr0071984">
    <property type="protein sequence ID" value="FBpp0071893"/>
    <property type="gene ID" value="FBgn0034814"/>
</dbReference>
<dbReference type="GeneID" id="37659"/>
<dbReference type="KEGG" id="dme:Dmel_CG9890"/>
<dbReference type="UCSC" id="CG9890-RA">
    <property type="organism name" value="d. melanogaster"/>
</dbReference>
<dbReference type="AGR" id="FB:FBgn0034814"/>
<dbReference type="FlyBase" id="FBgn0034814">
    <property type="gene designation" value="CG9890"/>
</dbReference>
<dbReference type="VEuPathDB" id="VectorBase:FBgn0034814"/>
<dbReference type="eggNOG" id="KOG2482">
    <property type="taxonomic scope" value="Eukaryota"/>
</dbReference>
<dbReference type="GeneTree" id="ENSGT00390000010852"/>
<dbReference type="HOGENOM" id="CLU_033436_0_0_1"/>
<dbReference type="InParanoid" id="Q9W1V7"/>
<dbReference type="OMA" id="WDKPEFF"/>
<dbReference type="OrthoDB" id="278606at2759"/>
<dbReference type="BioGRID-ORCS" id="37659">
    <property type="hits" value="0 hits in 1 CRISPR screen"/>
</dbReference>
<dbReference type="GenomeRNAi" id="37659"/>
<dbReference type="PRO" id="PR:Q9W1V7"/>
<dbReference type="Proteomes" id="UP000000803">
    <property type="component" value="Chromosome 2R"/>
</dbReference>
<dbReference type="Bgee" id="FBgn0034814">
    <property type="expression patterns" value="Expressed in adult middle midgut class I enteroendocrine cell in adult midgut (Drosophila) and 37 other cell types or tissues"/>
</dbReference>
<dbReference type="GO" id="GO:0000785">
    <property type="term" value="C:chromatin"/>
    <property type="evidence" value="ECO:0000314"/>
    <property type="project" value="UniProtKB"/>
</dbReference>
<dbReference type="GO" id="GO:0005737">
    <property type="term" value="C:cytoplasm"/>
    <property type="evidence" value="ECO:0000314"/>
    <property type="project" value="UniProtKB"/>
</dbReference>
<dbReference type="GO" id="GO:0005634">
    <property type="term" value="C:nucleus"/>
    <property type="evidence" value="ECO:0000314"/>
    <property type="project" value="UniProtKB"/>
</dbReference>
<dbReference type="GO" id="GO:0003682">
    <property type="term" value="F:chromatin binding"/>
    <property type="evidence" value="ECO:0000314"/>
    <property type="project" value="UniProtKB"/>
</dbReference>
<dbReference type="GO" id="GO:0003677">
    <property type="term" value="F:DNA binding"/>
    <property type="evidence" value="ECO:0007669"/>
    <property type="project" value="UniProtKB-KW"/>
</dbReference>
<dbReference type="GO" id="GO:0008270">
    <property type="term" value="F:zinc ion binding"/>
    <property type="evidence" value="ECO:0007669"/>
    <property type="project" value="UniProtKB-KW"/>
</dbReference>
<dbReference type="GO" id="GO:0010628">
    <property type="term" value="P:positive regulation of gene expression"/>
    <property type="evidence" value="ECO:0000315"/>
    <property type="project" value="UniProtKB"/>
</dbReference>
<dbReference type="InterPro" id="IPR041661">
    <property type="entry name" value="ZN622/Rei1/Reh1_Znf-C2H2"/>
</dbReference>
<dbReference type="InterPro" id="IPR040048">
    <property type="entry name" value="ZNF277"/>
</dbReference>
<dbReference type="InterPro" id="IPR036236">
    <property type="entry name" value="Znf_C2H2_sf"/>
</dbReference>
<dbReference type="InterPro" id="IPR013087">
    <property type="entry name" value="Znf_C2H2_type"/>
</dbReference>
<dbReference type="PANTHER" id="PTHR13267">
    <property type="entry name" value="ZINC FINGER PROTEIN 277"/>
    <property type="match status" value="1"/>
</dbReference>
<dbReference type="PANTHER" id="PTHR13267:SF3">
    <property type="entry name" value="ZINC FINGER PROTEIN 277"/>
    <property type="match status" value="1"/>
</dbReference>
<dbReference type="Pfam" id="PF12756">
    <property type="entry name" value="zf-C2H2_2"/>
    <property type="match status" value="2"/>
</dbReference>
<dbReference type="SMART" id="SM00355">
    <property type="entry name" value="ZnF_C2H2"/>
    <property type="match status" value="4"/>
</dbReference>
<dbReference type="SUPFAM" id="SSF57667">
    <property type="entry name" value="beta-beta-alpha zinc fingers"/>
    <property type="match status" value="2"/>
</dbReference>
<dbReference type="PROSITE" id="PS00028">
    <property type="entry name" value="ZINC_FINGER_C2H2_1"/>
    <property type="match status" value="2"/>
</dbReference>
<dbReference type="PROSITE" id="PS50157">
    <property type="entry name" value="ZINC_FINGER_C2H2_2"/>
    <property type="match status" value="1"/>
</dbReference>
<name>ZN277_DROME</name>
<sequence length="452" mass="53217">MEHEVAVSGGDSSLEEITGSSKLKPSKNTAIKCLKCDKVYIFPSDKDDCLAHLYMEHRLVIADVEDIALLEDYLQYWEKEFHTHEFEQYCTTMFLDQLPDGKYAKNEKYYLLCDILPQDYELRRRLKEKRLSEALERHQFELTDRTFSKECLFCRAIIKGLRADYLDHLFDKHFLLVGKPEKLVYVDELLDHLEENLNRLMCLYCEKIFRDRPTLKEHMRKKGHKRINPNRREYDKYFLINYNRVPTAPTPRKQHLQKRRRETASVSTVADPETGSVDFDKHFARPDSDGEHDSDWSDWAADGEPSSIKCLFCHHLGDNFTALKKHMHEVHRLDFEKATSSLNFYQRVKVVNYLRRQMCLLRCVTCDLQFDEEELLVEHMAQESHHGIGDKESWDKPEFFFPYIENDGLLCVLDDSGGDDPDVDTVRIISEDSLAQINKDAERLSLENFKLL</sequence>
<reference evidence="9" key="1">
    <citation type="journal article" date="2000" name="Science">
        <title>The genome sequence of Drosophila melanogaster.</title>
        <authorList>
            <person name="Adams M.D."/>
            <person name="Celniker S.E."/>
            <person name="Holt R.A."/>
            <person name="Evans C.A."/>
            <person name="Gocayne J.D."/>
            <person name="Amanatides P.G."/>
            <person name="Scherer S.E."/>
            <person name="Li P.W."/>
            <person name="Hoskins R.A."/>
            <person name="Galle R.F."/>
            <person name="George R.A."/>
            <person name="Lewis S.E."/>
            <person name="Richards S."/>
            <person name="Ashburner M."/>
            <person name="Henderson S.N."/>
            <person name="Sutton G.G."/>
            <person name="Wortman J.R."/>
            <person name="Yandell M.D."/>
            <person name="Zhang Q."/>
            <person name="Chen L.X."/>
            <person name="Brandon R.C."/>
            <person name="Rogers Y.-H.C."/>
            <person name="Blazej R.G."/>
            <person name="Champe M."/>
            <person name="Pfeiffer B.D."/>
            <person name="Wan K.H."/>
            <person name="Doyle C."/>
            <person name="Baxter E.G."/>
            <person name="Helt G."/>
            <person name="Nelson C.R."/>
            <person name="Miklos G.L.G."/>
            <person name="Abril J.F."/>
            <person name="Agbayani A."/>
            <person name="An H.-J."/>
            <person name="Andrews-Pfannkoch C."/>
            <person name="Baldwin D."/>
            <person name="Ballew R.M."/>
            <person name="Basu A."/>
            <person name="Baxendale J."/>
            <person name="Bayraktaroglu L."/>
            <person name="Beasley E.M."/>
            <person name="Beeson K.Y."/>
            <person name="Benos P.V."/>
            <person name="Berman B.P."/>
            <person name="Bhandari D."/>
            <person name="Bolshakov S."/>
            <person name="Borkova D."/>
            <person name="Botchan M.R."/>
            <person name="Bouck J."/>
            <person name="Brokstein P."/>
            <person name="Brottier P."/>
            <person name="Burtis K.C."/>
            <person name="Busam D.A."/>
            <person name="Butler H."/>
            <person name="Cadieu E."/>
            <person name="Center A."/>
            <person name="Chandra I."/>
            <person name="Cherry J.M."/>
            <person name="Cawley S."/>
            <person name="Dahlke C."/>
            <person name="Davenport L.B."/>
            <person name="Davies P."/>
            <person name="de Pablos B."/>
            <person name="Delcher A."/>
            <person name="Deng Z."/>
            <person name="Mays A.D."/>
            <person name="Dew I."/>
            <person name="Dietz S.M."/>
            <person name="Dodson K."/>
            <person name="Doup L.E."/>
            <person name="Downes M."/>
            <person name="Dugan-Rocha S."/>
            <person name="Dunkov B.C."/>
            <person name="Dunn P."/>
            <person name="Durbin K.J."/>
            <person name="Evangelista C.C."/>
            <person name="Ferraz C."/>
            <person name="Ferriera S."/>
            <person name="Fleischmann W."/>
            <person name="Fosler C."/>
            <person name="Gabrielian A.E."/>
            <person name="Garg N.S."/>
            <person name="Gelbart W.M."/>
            <person name="Glasser K."/>
            <person name="Glodek A."/>
            <person name="Gong F."/>
            <person name="Gorrell J.H."/>
            <person name="Gu Z."/>
            <person name="Guan P."/>
            <person name="Harris M."/>
            <person name="Harris N.L."/>
            <person name="Harvey D.A."/>
            <person name="Heiman T.J."/>
            <person name="Hernandez J.R."/>
            <person name="Houck J."/>
            <person name="Hostin D."/>
            <person name="Houston K.A."/>
            <person name="Howland T.J."/>
            <person name="Wei M.-H."/>
            <person name="Ibegwam C."/>
            <person name="Jalali M."/>
            <person name="Kalush F."/>
            <person name="Karpen G.H."/>
            <person name="Ke Z."/>
            <person name="Kennison J.A."/>
            <person name="Ketchum K.A."/>
            <person name="Kimmel B.E."/>
            <person name="Kodira C.D."/>
            <person name="Kraft C.L."/>
            <person name="Kravitz S."/>
            <person name="Kulp D."/>
            <person name="Lai Z."/>
            <person name="Lasko P."/>
            <person name="Lei Y."/>
            <person name="Levitsky A.A."/>
            <person name="Li J.H."/>
            <person name="Li Z."/>
            <person name="Liang Y."/>
            <person name="Lin X."/>
            <person name="Liu X."/>
            <person name="Mattei B."/>
            <person name="McIntosh T.C."/>
            <person name="McLeod M.P."/>
            <person name="McPherson D."/>
            <person name="Merkulov G."/>
            <person name="Milshina N.V."/>
            <person name="Mobarry C."/>
            <person name="Morris J."/>
            <person name="Moshrefi A."/>
            <person name="Mount S.M."/>
            <person name="Moy M."/>
            <person name="Murphy B."/>
            <person name="Murphy L."/>
            <person name="Muzny D.M."/>
            <person name="Nelson D.L."/>
            <person name="Nelson D.R."/>
            <person name="Nelson K.A."/>
            <person name="Nixon K."/>
            <person name="Nusskern D.R."/>
            <person name="Pacleb J.M."/>
            <person name="Palazzolo M."/>
            <person name="Pittman G.S."/>
            <person name="Pan S."/>
            <person name="Pollard J."/>
            <person name="Puri V."/>
            <person name="Reese M.G."/>
            <person name="Reinert K."/>
            <person name="Remington K."/>
            <person name="Saunders R.D.C."/>
            <person name="Scheeler F."/>
            <person name="Shen H."/>
            <person name="Shue B.C."/>
            <person name="Siden-Kiamos I."/>
            <person name="Simpson M."/>
            <person name="Skupski M.P."/>
            <person name="Smith T.J."/>
            <person name="Spier E."/>
            <person name="Spradling A.C."/>
            <person name="Stapleton M."/>
            <person name="Strong R."/>
            <person name="Sun E."/>
            <person name="Svirskas R."/>
            <person name="Tector C."/>
            <person name="Turner R."/>
            <person name="Venter E."/>
            <person name="Wang A.H."/>
            <person name="Wang X."/>
            <person name="Wang Z.-Y."/>
            <person name="Wassarman D.A."/>
            <person name="Weinstock G.M."/>
            <person name="Weissenbach J."/>
            <person name="Williams S.M."/>
            <person name="Woodage T."/>
            <person name="Worley K.C."/>
            <person name="Wu D."/>
            <person name="Yang S."/>
            <person name="Yao Q.A."/>
            <person name="Ye J."/>
            <person name="Yeh R.-F."/>
            <person name="Zaveri J.S."/>
            <person name="Zhan M."/>
            <person name="Zhang G."/>
            <person name="Zhao Q."/>
            <person name="Zheng L."/>
            <person name="Zheng X.H."/>
            <person name="Zhong F.N."/>
            <person name="Zhong W."/>
            <person name="Zhou X."/>
            <person name="Zhu S.C."/>
            <person name="Zhu X."/>
            <person name="Smith H.O."/>
            <person name="Gibbs R.A."/>
            <person name="Myers E.W."/>
            <person name="Rubin G.M."/>
            <person name="Venter J.C."/>
        </authorList>
    </citation>
    <scope>NUCLEOTIDE SEQUENCE [LARGE SCALE GENOMIC DNA]</scope>
    <source>
        <strain evidence="9">Berkeley</strain>
    </source>
</reference>
<reference evidence="9" key="2">
    <citation type="journal article" date="2002" name="Genome Biol.">
        <title>Annotation of the Drosophila melanogaster euchromatic genome: a systematic review.</title>
        <authorList>
            <person name="Misra S."/>
            <person name="Crosby M.A."/>
            <person name="Mungall C.J."/>
            <person name="Matthews B.B."/>
            <person name="Campbell K.S."/>
            <person name="Hradecky P."/>
            <person name="Huang Y."/>
            <person name="Kaminker J.S."/>
            <person name="Millburn G.H."/>
            <person name="Prochnik S.E."/>
            <person name="Smith C.D."/>
            <person name="Tupy J.L."/>
            <person name="Whitfield E.J."/>
            <person name="Bayraktaroglu L."/>
            <person name="Berman B.P."/>
            <person name="Bettencourt B.R."/>
            <person name="Celniker S.E."/>
            <person name="de Grey A.D.N.J."/>
            <person name="Drysdale R.A."/>
            <person name="Harris N.L."/>
            <person name="Richter J."/>
            <person name="Russo S."/>
            <person name="Schroeder A.J."/>
            <person name="Shu S.Q."/>
            <person name="Stapleton M."/>
            <person name="Yamada C."/>
            <person name="Ashburner M."/>
            <person name="Gelbart W.M."/>
            <person name="Rubin G.M."/>
            <person name="Lewis S.E."/>
        </authorList>
    </citation>
    <scope>GENOME REANNOTATION</scope>
    <source>
        <strain evidence="9">Berkeley</strain>
    </source>
</reference>
<reference evidence="7" key="3">
    <citation type="journal article" date="2002" name="Genome Biol.">
        <title>A Drosophila full-length cDNA resource.</title>
        <authorList>
            <person name="Stapleton M."/>
            <person name="Carlson J.W."/>
            <person name="Brokstein P."/>
            <person name="Yu C."/>
            <person name="Champe M."/>
            <person name="George R.A."/>
            <person name="Guarin H."/>
            <person name="Kronmiller B."/>
            <person name="Pacleb J.M."/>
            <person name="Park S."/>
            <person name="Wan K.H."/>
            <person name="Rubin G.M."/>
            <person name="Celniker S.E."/>
        </authorList>
    </citation>
    <scope>NUCLEOTIDE SEQUENCE [LARGE SCALE MRNA]</scope>
    <source>
        <strain evidence="7">Berkeley</strain>
        <tissue evidence="7">Embryo</tissue>
    </source>
</reference>
<reference evidence="6" key="4">
    <citation type="journal article" date="2018" name="Acta Naturae">
        <title>Zinc Finger Protein CG9890 - New Component of ENY2-Containing Complexes of Drosophila.</title>
        <authorList>
            <person name="Fursova N.A."/>
            <person name="Nikolenko J.V."/>
            <person name="Soshnikova N.V."/>
            <person name="Mazina M.Y."/>
            <person name="Vorobyova N.E."/>
            <person name="Krasnov A.N."/>
        </authorList>
    </citation>
    <scope>FUNCTION</scope>
    <scope>INTERACTION WITH E(Y)2; ORC2; ORC3; GCN5; THOC5; TBP AND POLYBROMO</scope>
    <scope>SUBCELLULAR LOCATION</scope>
</reference>
<reference evidence="6" key="5">
    <citation type="journal article" date="2020" name="Acta Naturae">
        <title>Drosophila Zinc Finger Protein CG9890 Is Colocalized with Chromatin Modifying and Remodeling Complexes on Gene Promoters and Involved in Transcription Regulation.</title>
        <authorList>
            <person name="Fursova N.A."/>
            <person name="Mazina M.Y."/>
            <person name="Nikolenko J.V."/>
            <person name="Vorobyova N.E."/>
            <person name="Krasnov A.N."/>
        </authorList>
    </citation>
    <scope>FUNCTION</scope>
    <scope>SUBCELLULAR LOCATION</scope>
</reference>
<accession>Q9W1V7</accession>
<feature type="chain" id="PRO_0000455831" description="Zinc finger protein 277">
    <location>
        <begin position="1"/>
        <end position="452"/>
    </location>
</feature>
<feature type="zinc finger region" description="C2H2-type 1" evidence="2">
    <location>
        <begin position="200"/>
        <end position="224"/>
    </location>
</feature>
<feature type="zinc finger region" description="C2H2-type 2" evidence="2">
    <location>
        <begin position="361"/>
        <end position="385"/>
    </location>
</feature>
<feature type="region of interest" description="Disordered" evidence="3">
    <location>
        <begin position="248"/>
        <end position="271"/>
    </location>
</feature>
<feature type="compositionally biased region" description="Basic residues" evidence="3">
    <location>
        <begin position="252"/>
        <end position="261"/>
    </location>
</feature>
<keyword id="KW-0963">Cytoplasm</keyword>
<keyword id="KW-0238">DNA-binding</keyword>
<keyword id="KW-0479">Metal-binding</keyword>
<keyword id="KW-0539">Nucleus</keyword>
<keyword id="KW-1185">Reference proteome</keyword>
<keyword id="KW-0677">Repeat</keyword>
<keyword id="KW-0804">Transcription</keyword>
<keyword id="KW-0862">Zinc</keyword>
<keyword id="KW-0863">Zinc-finger</keyword>
<gene>
    <name evidence="8" type="ORF">CG9890</name>
</gene>